<protein>
    <recommendedName>
        <fullName evidence="1">UDP-N-acetylglucosamine--N-acetylmuramyl-(pentapeptide) pyrophosphoryl-undecaprenol N-acetylglucosamine transferase</fullName>
        <ecNumber evidence="1">2.4.1.227</ecNumber>
    </recommendedName>
    <alternativeName>
        <fullName evidence="1">Undecaprenyl-PP-MurNAc-pentapeptide-UDPGlcNAc GlcNAc transferase</fullName>
    </alternativeName>
</protein>
<accession>Q89FU7</accession>
<evidence type="ECO:0000255" key="1">
    <source>
        <dbReference type="HAMAP-Rule" id="MF_00033"/>
    </source>
</evidence>
<name>MURG_BRADU</name>
<sequence length="366" mass="38154">METSPLILLAAGGTGGHLFPAEALGVELIRRGFRVRLVTDERALRYSGLFSKDMIDVVSSETARGRNPFQVAYAGLTLAAGTLSAYSLIKRLKPVAVVGFGGYPTLPPLVAAKFAGVPGIIHDANAVLGRANRFLSSRVRAIATSLPGVLDRDPALSGKTTTVGTPMRPAVLAAAAVPYAAPEANGPLRLLVVGGSQGARIMADIVPGAIERLEPALWGRLILTQQVRDEDMNRVRAVYDKLKIKAELAPFFTDLPARLASNHLVVSRSGAGTVAELAAIGRPSILVPLPGSIDQDQFANAGVLAKVDGAIRIPQTEFTSDRLASEISALAAEPARLTAMAAAAKGAGRLDAAERLADLVVKVAGL</sequence>
<organism>
    <name type="scientific">Bradyrhizobium diazoefficiens (strain JCM 10833 / BCRC 13528 / IAM 13628 / NBRC 14792 / USDA 110)</name>
    <dbReference type="NCBI Taxonomy" id="224911"/>
    <lineage>
        <taxon>Bacteria</taxon>
        <taxon>Pseudomonadati</taxon>
        <taxon>Pseudomonadota</taxon>
        <taxon>Alphaproteobacteria</taxon>
        <taxon>Hyphomicrobiales</taxon>
        <taxon>Nitrobacteraceae</taxon>
        <taxon>Bradyrhizobium</taxon>
    </lineage>
</organism>
<gene>
    <name evidence="1" type="primary">murG</name>
    <name type="ordered locus">bll6602</name>
</gene>
<dbReference type="EC" id="2.4.1.227" evidence="1"/>
<dbReference type="EMBL" id="BA000040">
    <property type="protein sequence ID" value="BAC51867.1"/>
    <property type="molecule type" value="Genomic_DNA"/>
</dbReference>
<dbReference type="RefSeq" id="NP_773242.1">
    <property type="nucleotide sequence ID" value="NC_004463.1"/>
</dbReference>
<dbReference type="RefSeq" id="WP_011089342.1">
    <property type="nucleotide sequence ID" value="NC_004463.1"/>
</dbReference>
<dbReference type="SMR" id="Q89FU7"/>
<dbReference type="FunCoup" id="Q89FU7">
    <property type="interactions" value="363"/>
</dbReference>
<dbReference type="STRING" id="224911.AAV28_30590"/>
<dbReference type="CAZy" id="GT28">
    <property type="family name" value="Glycosyltransferase Family 28"/>
</dbReference>
<dbReference type="EnsemblBacteria" id="BAC51867">
    <property type="protein sequence ID" value="BAC51867"/>
    <property type="gene ID" value="BAC51867"/>
</dbReference>
<dbReference type="GeneID" id="46493574"/>
<dbReference type="KEGG" id="bja:bll6602"/>
<dbReference type="PATRIC" id="fig|224911.44.peg.6614"/>
<dbReference type="eggNOG" id="COG0707">
    <property type="taxonomic scope" value="Bacteria"/>
</dbReference>
<dbReference type="HOGENOM" id="CLU_037404_2_1_5"/>
<dbReference type="InParanoid" id="Q89FU7"/>
<dbReference type="OrthoDB" id="9808936at2"/>
<dbReference type="PhylomeDB" id="Q89FU7"/>
<dbReference type="UniPathway" id="UPA00219"/>
<dbReference type="Proteomes" id="UP000002526">
    <property type="component" value="Chromosome"/>
</dbReference>
<dbReference type="GO" id="GO:0005886">
    <property type="term" value="C:plasma membrane"/>
    <property type="evidence" value="ECO:0007669"/>
    <property type="project" value="UniProtKB-SubCell"/>
</dbReference>
<dbReference type="GO" id="GO:0051991">
    <property type="term" value="F:UDP-N-acetyl-D-glucosamine:N-acetylmuramoyl-L-alanyl-D-glutamyl-meso-2,6-diaminopimelyl-D-alanyl-D-alanine-diphosphoundecaprenol 4-beta-N-acetylglucosaminlytransferase activity"/>
    <property type="evidence" value="ECO:0007669"/>
    <property type="project" value="RHEA"/>
</dbReference>
<dbReference type="GO" id="GO:0050511">
    <property type="term" value="F:undecaprenyldiphospho-muramoylpentapeptide beta-N-acetylglucosaminyltransferase activity"/>
    <property type="evidence" value="ECO:0000318"/>
    <property type="project" value="GO_Central"/>
</dbReference>
<dbReference type="GO" id="GO:0005975">
    <property type="term" value="P:carbohydrate metabolic process"/>
    <property type="evidence" value="ECO:0007669"/>
    <property type="project" value="InterPro"/>
</dbReference>
<dbReference type="GO" id="GO:0051301">
    <property type="term" value="P:cell division"/>
    <property type="evidence" value="ECO:0007669"/>
    <property type="project" value="UniProtKB-KW"/>
</dbReference>
<dbReference type="GO" id="GO:0071555">
    <property type="term" value="P:cell wall organization"/>
    <property type="evidence" value="ECO:0007669"/>
    <property type="project" value="UniProtKB-KW"/>
</dbReference>
<dbReference type="GO" id="GO:0030259">
    <property type="term" value="P:lipid glycosylation"/>
    <property type="evidence" value="ECO:0007669"/>
    <property type="project" value="UniProtKB-UniRule"/>
</dbReference>
<dbReference type="GO" id="GO:0009252">
    <property type="term" value="P:peptidoglycan biosynthetic process"/>
    <property type="evidence" value="ECO:0007669"/>
    <property type="project" value="UniProtKB-UniRule"/>
</dbReference>
<dbReference type="GO" id="GO:0008360">
    <property type="term" value="P:regulation of cell shape"/>
    <property type="evidence" value="ECO:0007669"/>
    <property type="project" value="UniProtKB-KW"/>
</dbReference>
<dbReference type="CDD" id="cd03785">
    <property type="entry name" value="GT28_MurG"/>
    <property type="match status" value="1"/>
</dbReference>
<dbReference type="Gene3D" id="3.40.50.2000">
    <property type="entry name" value="Glycogen Phosphorylase B"/>
    <property type="match status" value="2"/>
</dbReference>
<dbReference type="HAMAP" id="MF_00033">
    <property type="entry name" value="MurG"/>
    <property type="match status" value="1"/>
</dbReference>
<dbReference type="InterPro" id="IPR006009">
    <property type="entry name" value="GlcNAc_MurG"/>
</dbReference>
<dbReference type="InterPro" id="IPR007235">
    <property type="entry name" value="Glyco_trans_28_C"/>
</dbReference>
<dbReference type="InterPro" id="IPR004276">
    <property type="entry name" value="GlycoTrans_28_N"/>
</dbReference>
<dbReference type="NCBIfam" id="TIGR01133">
    <property type="entry name" value="murG"/>
    <property type="match status" value="1"/>
</dbReference>
<dbReference type="PANTHER" id="PTHR21015:SF22">
    <property type="entry name" value="GLYCOSYLTRANSFERASE"/>
    <property type="match status" value="1"/>
</dbReference>
<dbReference type="PANTHER" id="PTHR21015">
    <property type="entry name" value="UDP-N-ACETYLGLUCOSAMINE--N-ACETYLMURAMYL-(PENTAPEPTIDE) PYROPHOSPHORYL-UNDECAPRENOL N-ACETYLGLUCOSAMINE TRANSFERASE 1"/>
    <property type="match status" value="1"/>
</dbReference>
<dbReference type="Pfam" id="PF04101">
    <property type="entry name" value="Glyco_tran_28_C"/>
    <property type="match status" value="1"/>
</dbReference>
<dbReference type="Pfam" id="PF03033">
    <property type="entry name" value="Glyco_transf_28"/>
    <property type="match status" value="1"/>
</dbReference>
<dbReference type="SUPFAM" id="SSF53756">
    <property type="entry name" value="UDP-Glycosyltransferase/glycogen phosphorylase"/>
    <property type="match status" value="1"/>
</dbReference>
<comment type="function">
    <text evidence="1">Cell wall formation. Catalyzes the transfer of a GlcNAc subunit on undecaprenyl-pyrophosphoryl-MurNAc-pentapeptide (lipid intermediate I) to form undecaprenyl-pyrophosphoryl-MurNAc-(pentapeptide)GlcNAc (lipid intermediate II).</text>
</comment>
<comment type="catalytic activity">
    <reaction evidence="1">
        <text>di-trans,octa-cis-undecaprenyl diphospho-N-acetyl-alpha-D-muramoyl-L-alanyl-D-glutamyl-meso-2,6-diaminopimeloyl-D-alanyl-D-alanine + UDP-N-acetyl-alpha-D-glucosamine = di-trans,octa-cis-undecaprenyl diphospho-[N-acetyl-alpha-D-glucosaminyl-(1-&gt;4)]-N-acetyl-alpha-D-muramoyl-L-alanyl-D-glutamyl-meso-2,6-diaminopimeloyl-D-alanyl-D-alanine + UDP + H(+)</text>
        <dbReference type="Rhea" id="RHEA:31227"/>
        <dbReference type="ChEBI" id="CHEBI:15378"/>
        <dbReference type="ChEBI" id="CHEBI:57705"/>
        <dbReference type="ChEBI" id="CHEBI:58223"/>
        <dbReference type="ChEBI" id="CHEBI:61387"/>
        <dbReference type="ChEBI" id="CHEBI:61388"/>
        <dbReference type="EC" id="2.4.1.227"/>
    </reaction>
</comment>
<comment type="pathway">
    <text evidence="1">Cell wall biogenesis; peptidoglycan biosynthesis.</text>
</comment>
<comment type="subcellular location">
    <subcellularLocation>
        <location evidence="1">Cell inner membrane</location>
        <topology evidence="1">Peripheral membrane protein</topology>
        <orientation evidence="1">Cytoplasmic side</orientation>
    </subcellularLocation>
</comment>
<comment type="similarity">
    <text evidence="1">Belongs to the glycosyltransferase 28 family. MurG subfamily.</text>
</comment>
<keyword id="KW-0131">Cell cycle</keyword>
<keyword id="KW-0132">Cell division</keyword>
<keyword id="KW-0997">Cell inner membrane</keyword>
<keyword id="KW-1003">Cell membrane</keyword>
<keyword id="KW-0133">Cell shape</keyword>
<keyword id="KW-0961">Cell wall biogenesis/degradation</keyword>
<keyword id="KW-0328">Glycosyltransferase</keyword>
<keyword id="KW-0472">Membrane</keyword>
<keyword id="KW-0573">Peptidoglycan synthesis</keyword>
<keyword id="KW-1185">Reference proteome</keyword>
<keyword id="KW-0808">Transferase</keyword>
<feature type="chain" id="PRO_0000109150" description="UDP-N-acetylglucosamine--N-acetylmuramyl-(pentapeptide) pyrophosphoryl-undecaprenol N-acetylglucosamine transferase">
    <location>
        <begin position="1"/>
        <end position="366"/>
    </location>
</feature>
<feature type="binding site" evidence="1">
    <location>
        <begin position="14"/>
        <end position="16"/>
    </location>
    <ligand>
        <name>UDP-N-acetyl-alpha-D-glucosamine</name>
        <dbReference type="ChEBI" id="CHEBI:57705"/>
    </ligand>
</feature>
<feature type="binding site" evidence="1">
    <location>
        <position position="125"/>
    </location>
    <ligand>
        <name>UDP-N-acetyl-alpha-D-glucosamine</name>
        <dbReference type="ChEBI" id="CHEBI:57705"/>
    </ligand>
</feature>
<feature type="binding site" evidence="1">
    <location>
        <position position="168"/>
    </location>
    <ligand>
        <name>UDP-N-acetyl-alpha-D-glucosamine</name>
        <dbReference type="ChEBI" id="CHEBI:57705"/>
    </ligand>
</feature>
<feature type="binding site" evidence="1">
    <location>
        <position position="196"/>
    </location>
    <ligand>
        <name>UDP-N-acetyl-alpha-D-glucosamine</name>
        <dbReference type="ChEBI" id="CHEBI:57705"/>
    </ligand>
</feature>
<feature type="binding site" evidence="1">
    <location>
        <position position="297"/>
    </location>
    <ligand>
        <name>UDP-N-acetyl-alpha-D-glucosamine</name>
        <dbReference type="ChEBI" id="CHEBI:57705"/>
    </ligand>
</feature>
<reference key="1">
    <citation type="journal article" date="2002" name="DNA Res.">
        <title>Complete genomic sequence of nitrogen-fixing symbiotic bacterium Bradyrhizobium japonicum USDA110.</title>
        <authorList>
            <person name="Kaneko T."/>
            <person name="Nakamura Y."/>
            <person name="Sato S."/>
            <person name="Minamisawa K."/>
            <person name="Uchiumi T."/>
            <person name="Sasamoto S."/>
            <person name="Watanabe A."/>
            <person name="Idesawa K."/>
            <person name="Iriguchi M."/>
            <person name="Kawashima K."/>
            <person name="Kohara M."/>
            <person name="Matsumoto M."/>
            <person name="Shimpo S."/>
            <person name="Tsuruoka H."/>
            <person name="Wada T."/>
            <person name="Yamada M."/>
            <person name="Tabata S."/>
        </authorList>
    </citation>
    <scope>NUCLEOTIDE SEQUENCE [LARGE SCALE GENOMIC DNA]</scope>
    <source>
        <strain>JCM 10833 / BCRC 13528 / IAM 13628 / NBRC 14792 / USDA 110</strain>
    </source>
</reference>
<proteinExistence type="inferred from homology"/>